<feature type="chain" id="PRO_0000117546" description="NADH-ubiquinone oxidoreductase chain 2">
    <location>
        <begin position="1"/>
        <end position="346"/>
    </location>
</feature>
<feature type="transmembrane region" description="Helical" evidence="2">
    <location>
        <begin position="1"/>
        <end position="21"/>
    </location>
</feature>
<feature type="transmembrane region" description="Helical" evidence="2">
    <location>
        <begin position="25"/>
        <end position="45"/>
    </location>
</feature>
<feature type="transmembrane region" description="Helical" evidence="2">
    <location>
        <begin position="60"/>
        <end position="80"/>
    </location>
</feature>
<feature type="transmembrane region" description="Helical" evidence="2">
    <location>
        <begin position="95"/>
        <end position="115"/>
    </location>
</feature>
<feature type="transmembrane region" description="Helical" evidence="2">
    <location>
        <begin position="124"/>
        <end position="144"/>
    </location>
</feature>
<feature type="transmembrane region" description="Helical" evidence="2">
    <location>
        <begin position="149"/>
        <end position="169"/>
    </location>
</feature>
<feature type="transmembrane region" description="Helical" evidence="2">
    <location>
        <begin position="178"/>
        <end position="195"/>
    </location>
</feature>
<feature type="transmembrane region" description="Helical" evidence="2">
    <location>
        <begin position="200"/>
        <end position="219"/>
    </location>
</feature>
<feature type="transmembrane region" description="Helical" evidence="2">
    <location>
        <begin position="242"/>
        <end position="262"/>
    </location>
</feature>
<feature type="transmembrane region" description="Helical" evidence="2">
    <location>
        <begin position="274"/>
        <end position="294"/>
    </location>
</feature>
<feature type="transmembrane region" description="Helical" evidence="2">
    <location>
        <begin position="326"/>
        <end position="346"/>
    </location>
</feature>
<accession>O63798</accession>
<reference key="1">
    <citation type="journal article" date="1998" name="Mol. Phylogenet. Evol.">
        <title>Comparing molecular evolution in two mitochondrial protein coding genes (cytochrome b and ND2) in the dabbling ducks (Tribe: Anatini).</title>
        <authorList>
            <person name="Johnson K.P."/>
            <person name="Sorenson M.D."/>
        </authorList>
    </citation>
    <scope>NUCLEOTIDE SEQUENCE [GENOMIC DNA]</scope>
</reference>
<name>NU2M_MARPN</name>
<geneLocation type="mitochondrion"/>
<organism>
    <name type="scientific">Mareca penelope</name>
    <name type="common">Eurasian wigeon</name>
    <name type="synonym">Anas penelope</name>
    <dbReference type="NCBI Taxonomy" id="8838"/>
    <lineage>
        <taxon>Eukaryota</taxon>
        <taxon>Metazoa</taxon>
        <taxon>Chordata</taxon>
        <taxon>Craniata</taxon>
        <taxon>Vertebrata</taxon>
        <taxon>Euteleostomi</taxon>
        <taxon>Archelosauria</taxon>
        <taxon>Archosauria</taxon>
        <taxon>Dinosauria</taxon>
        <taxon>Saurischia</taxon>
        <taxon>Theropoda</taxon>
        <taxon>Coelurosauria</taxon>
        <taxon>Aves</taxon>
        <taxon>Neognathae</taxon>
        <taxon>Galloanserae</taxon>
        <taxon>Anseriformes</taxon>
        <taxon>Anatidae</taxon>
        <taxon>Anatinae</taxon>
        <taxon>Mareca</taxon>
    </lineage>
</organism>
<sequence>MNPHATPVLVLSLALGTTITISSNHWVLAWTGLEINTLAIIPLISKSHHPRAVEAATKYFLTQAAASALVLFSSMTNAWATGQWDITQLNHPTSCLLLTAAIAIKLGLVPFHFWFPEVLQGSPLMTALLLSTLMKFPPLTLLLMTSKSLNPALLTTMALASAALGGWMGLNQTQTRKILAFSSISHLGWIAIILVYSPKLALLTFYLYTIMTSAVFMALNKIKALNMSMVLTSWTKTPVLNATLMLMLLSLAGLPPLTGFMPKWLIIQELTKQEMTPAAMAIAMLSLLSLFFYLRLAYHSTITLPPNSSNHMKQWYTSKPPSTPTAILASLSILLLPLSPMVHAIV</sequence>
<evidence type="ECO:0000250" key="1"/>
<evidence type="ECO:0000255" key="2"/>
<evidence type="ECO:0000305" key="3"/>
<keyword id="KW-0249">Electron transport</keyword>
<keyword id="KW-0472">Membrane</keyword>
<keyword id="KW-0496">Mitochondrion</keyword>
<keyword id="KW-0999">Mitochondrion inner membrane</keyword>
<keyword id="KW-0520">NAD</keyword>
<keyword id="KW-0679">Respiratory chain</keyword>
<keyword id="KW-1278">Translocase</keyword>
<keyword id="KW-0812">Transmembrane</keyword>
<keyword id="KW-1133">Transmembrane helix</keyword>
<keyword id="KW-0813">Transport</keyword>
<keyword id="KW-0830">Ubiquinone</keyword>
<proteinExistence type="inferred from homology"/>
<gene>
    <name type="primary">MT-ND2</name>
    <name type="synonym">MTND2</name>
    <name type="synonym">NADH2</name>
    <name type="synonym">ND2</name>
</gene>
<dbReference type="EC" id="7.1.1.2"/>
<dbReference type="EMBL" id="AF059167">
    <property type="protein sequence ID" value="AAC14861.1"/>
    <property type="molecule type" value="Genomic_DNA"/>
</dbReference>
<dbReference type="SMR" id="O63798"/>
<dbReference type="GO" id="GO:0005743">
    <property type="term" value="C:mitochondrial inner membrane"/>
    <property type="evidence" value="ECO:0007669"/>
    <property type="project" value="UniProtKB-SubCell"/>
</dbReference>
<dbReference type="GO" id="GO:0008137">
    <property type="term" value="F:NADH dehydrogenase (ubiquinone) activity"/>
    <property type="evidence" value="ECO:0007669"/>
    <property type="project" value="UniProtKB-EC"/>
</dbReference>
<dbReference type="GO" id="GO:0006120">
    <property type="term" value="P:mitochondrial electron transport, NADH to ubiquinone"/>
    <property type="evidence" value="ECO:0007669"/>
    <property type="project" value="InterPro"/>
</dbReference>
<dbReference type="InterPro" id="IPR050175">
    <property type="entry name" value="Complex_I_Subunit_2"/>
</dbReference>
<dbReference type="InterPro" id="IPR010933">
    <property type="entry name" value="NADH_DH_su2_C"/>
</dbReference>
<dbReference type="InterPro" id="IPR003917">
    <property type="entry name" value="NADH_UbQ_OxRdtase_chain2"/>
</dbReference>
<dbReference type="InterPro" id="IPR001750">
    <property type="entry name" value="ND/Mrp_TM"/>
</dbReference>
<dbReference type="PANTHER" id="PTHR46552">
    <property type="entry name" value="NADH-UBIQUINONE OXIDOREDUCTASE CHAIN 2"/>
    <property type="match status" value="1"/>
</dbReference>
<dbReference type="PANTHER" id="PTHR46552:SF1">
    <property type="entry name" value="NADH-UBIQUINONE OXIDOREDUCTASE CHAIN 2"/>
    <property type="match status" value="1"/>
</dbReference>
<dbReference type="Pfam" id="PF06444">
    <property type="entry name" value="NADH_dehy_S2_C"/>
    <property type="match status" value="1"/>
</dbReference>
<dbReference type="Pfam" id="PF00361">
    <property type="entry name" value="Proton_antipo_M"/>
    <property type="match status" value="1"/>
</dbReference>
<dbReference type="PRINTS" id="PR01436">
    <property type="entry name" value="NADHDHGNASE2"/>
</dbReference>
<protein>
    <recommendedName>
        <fullName>NADH-ubiquinone oxidoreductase chain 2</fullName>
        <ecNumber>7.1.1.2</ecNumber>
    </recommendedName>
    <alternativeName>
        <fullName>NADH dehydrogenase subunit 2</fullName>
    </alternativeName>
</protein>
<comment type="function">
    <text evidence="1">Core subunit of the mitochondrial membrane respiratory chain NADH dehydrogenase (Complex I) that is believed to belong to the minimal assembly required for catalysis. Complex I functions in the transfer of electrons from NADH to the respiratory chain. The immediate electron acceptor for the enzyme is believed to be ubiquinone (By similarity).</text>
</comment>
<comment type="catalytic activity">
    <reaction>
        <text>a ubiquinone + NADH + 5 H(+)(in) = a ubiquinol + NAD(+) + 4 H(+)(out)</text>
        <dbReference type="Rhea" id="RHEA:29091"/>
        <dbReference type="Rhea" id="RHEA-COMP:9565"/>
        <dbReference type="Rhea" id="RHEA-COMP:9566"/>
        <dbReference type="ChEBI" id="CHEBI:15378"/>
        <dbReference type="ChEBI" id="CHEBI:16389"/>
        <dbReference type="ChEBI" id="CHEBI:17976"/>
        <dbReference type="ChEBI" id="CHEBI:57540"/>
        <dbReference type="ChEBI" id="CHEBI:57945"/>
        <dbReference type="EC" id="7.1.1.2"/>
    </reaction>
</comment>
<comment type="subcellular location">
    <subcellularLocation>
        <location>Mitochondrion inner membrane</location>
        <topology>Multi-pass membrane protein</topology>
    </subcellularLocation>
</comment>
<comment type="similarity">
    <text evidence="3">Belongs to the complex I subunit 2 family.</text>
</comment>